<proteinExistence type="evidence at protein level"/>
<organism>
    <name type="scientific">Cydia pomonella</name>
    <name type="common">Codling moth</name>
    <dbReference type="NCBI Taxonomy" id="82600"/>
    <lineage>
        <taxon>Eukaryota</taxon>
        <taxon>Metazoa</taxon>
        <taxon>Ecdysozoa</taxon>
        <taxon>Arthropoda</taxon>
        <taxon>Hexapoda</taxon>
        <taxon>Insecta</taxon>
        <taxon>Pterygota</taxon>
        <taxon>Neoptera</taxon>
        <taxon>Endopterygota</taxon>
        <taxon>Lepidoptera</taxon>
        <taxon>Glossata</taxon>
        <taxon>Ditrysia</taxon>
        <taxon>Tortricoidea</taxon>
        <taxon>Tortricidae</taxon>
        <taxon>Olethreutinae</taxon>
        <taxon>Grapholitini</taxon>
        <taxon>Cydia</taxon>
    </lineage>
</organism>
<name>ALL1_CYDPO</name>
<evidence type="ECO:0000269" key="1">
    <source>
    </source>
</evidence>
<evidence type="ECO:0000305" key="2"/>
<feature type="peptide" id="PRO_0000043476" description="Cydiastatin-1">
    <location>
        <begin position="1"/>
        <end position="8"/>
    </location>
</feature>
<feature type="modified residue" description="Leucine amide" evidence="1">
    <location>
        <position position="8"/>
    </location>
</feature>
<comment type="subcellular location">
    <subcellularLocation>
        <location>Secreted</location>
    </subcellularLocation>
</comment>
<comment type="similarity">
    <text evidence="2">Belongs to the allatostatin family.</text>
</comment>
<sequence length="8" mass="934">SPHYNFGL</sequence>
<reference key="1">
    <citation type="journal article" date="1997" name="Peptides">
        <title>Lepidopteran peptides of the allatostatin superfamily.</title>
        <authorList>
            <person name="Duve H."/>
            <person name="Johnsen A.H."/>
            <person name="Maestro J.-L."/>
            <person name="Scott A.G."/>
            <person name="Winstanley D."/>
            <person name="Davey M."/>
            <person name="East P.D."/>
            <person name="Thorpe A."/>
        </authorList>
    </citation>
    <scope>PROTEIN SEQUENCE</scope>
    <scope>AMIDATION AT LEU-8</scope>
    <source>
        <tissue>Larva</tissue>
    </source>
</reference>
<accession>P82152</accession>
<dbReference type="GO" id="GO:0005576">
    <property type="term" value="C:extracellular region"/>
    <property type="evidence" value="ECO:0007669"/>
    <property type="project" value="UniProtKB-SubCell"/>
</dbReference>
<dbReference type="GO" id="GO:0007218">
    <property type="term" value="P:neuropeptide signaling pathway"/>
    <property type="evidence" value="ECO:0007669"/>
    <property type="project" value="UniProtKB-KW"/>
</dbReference>
<protein>
    <recommendedName>
        <fullName>Cydiastatin-1</fullName>
    </recommendedName>
</protein>
<keyword id="KW-0027">Amidation</keyword>
<keyword id="KW-0903">Direct protein sequencing</keyword>
<keyword id="KW-0527">Neuropeptide</keyword>
<keyword id="KW-0964">Secreted</keyword>